<organism>
    <name type="scientific">Vibrio vulnificus (strain CMCP6)</name>
    <dbReference type="NCBI Taxonomy" id="216895"/>
    <lineage>
        <taxon>Bacteria</taxon>
        <taxon>Pseudomonadati</taxon>
        <taxon>Pseudomonadota</taxon>
        <taxon>Gammaproteobacteria</taxon>
        <taxon>Vibrionales</taxon>
        <taxon>Vibrionaceae</taxon>
        <taxon>Vibrio</taxon>
    </lineage>
</organism>
<keyword id="KW-0963">Cytoplasm</keyword>
<keyword id="KW-0238">DNA-binding</keyword>
<evidence type="ECO:0000255" key="1">
    <source>
        <dbReference type="HAMAP-Rule" id="MF_00274"/>
    </source>
</evidence>
<reference key="1">
    <citation type="submission" date="2002-12" db="EMBL/GenBank/DDBJ databases">
        <title>Complete genome sequence of Vibrio vulnificus CMCP6.</title>
        <authorList>
            <person name="Rhee J.H."/>
            <person name="Kim S.Y."/>
            <person name="Chung S.S."/>
            <person name="Kim J.J."/>
            <person name="Moon Y.H."/>
            <person name="Jeong H."/>
            <person name="Choy H.E."/>
        </authorList>
    </citation>
    <scope>NUCLEOTIDE SEQUENCE [LARGE SCALE GENOMIC DNA]</scope>
    <source>
        <strain>CMCP6</strain>
    </source>
</reference>
<reference key="2">
    <citation type="journal article" date="2011" name="Mol. Syst. Biol.">
        <title>Integrative genome-scale metabolic analysis of Vibrio vulnificus for drug targeting and discovery.</title>
        <authorList>
            <person name="Kim H.U."/>
            <person name="Kim S.Y."/>
            <person name="Jeong H."/>
            <person name="Kim T.Y."/>
            <person name="Kim J.J."/>
            <person name="Choy H.E."/>
            <person name="Yi K.Y."/>
            <person name="Rhee J.H."/>
            <person name="Lee S.Y."/>
        </authorList>
    </citation>
    <scope>SEQUENCE REVISION TO 30</scope>
    <source>
        <strain>CMCP6</strain>
    </source>
</reference>
<protein>
    <recommendedName>
        <fullName evidence="1">Nucleoid-associated protein VV1_2004</fullName>
    </recommendedName>
</protein>
<comment type="function">
    <text evidence="1">Binds to DNA and alters its conformation. May be involved in regulation of gene expression, nucleoid organization and DNA protection.</text>
</comment>
<comment type="subunit">
    <text evidence="1">Homodimer.</text>
</comment>
<comment type="subcellular location">
    <subcellularLocation>
        <location evidence="1">Cytoplasm</location>
        <location evidence="1">Nucleoid</location>
    </subcellularLocation>
</comment>
<comment type="similarity">
    <text evidence="1">Belongs to the YbaB/EbfC family.</text>
</comment>
<gene>
    <name type="ordered locus">VV1_2004</name>
</gene>
<dbReference type="EMBL" id="AE016795">
    <property type="protein sequence ID" value="AAO10401.2"/>
    <property type="molecule type" value="Genomic_DNA"/>
</dbReference>
<dbReference type="RefSeq" id="WP_011079900.1">
    <property type="nucleotide sequence ID" value="NC_004459.3"/>
</dbReference>
<dbReference type="KEGG" id="vvu:VV1_2004"/>
<dbReference type="HOGENOM" id="CLU_140930_0_0_6"/>
<dbReference type="Proteomes" id="UP000002275">
    <property type="component" value="Chromosome 1"/>
</dbReference>
<dbReference type="GO" id="GO:0043590">
    <property type="term" value="C:bacterial nucleoid"/>
    <property type="evidence" value="ECO:0007669"/>
    <property type="project" value="UniProtKB-UniRule"/>
</dbReference>
<dbReference type="GO" id="GO:0005829">
    <property type="term" value="C:cytosol"/>
    <property type="evidence" value="ECO:0007669"/>
    <property type="project" value="TreeGrafter"/>
</dbReference>
<dbReference type="GO" id="GO:0003677">
    <property type="term" value="F:DNA binding"/>
    <property type="evidence" value="ECO:0007669"/>
    <property type="project" value="UniProtKB-UniRule"/>
</dbReference>
<dbReference type="FunFam" id="3.30.1310.10:FF:000001">
    <property type="entry name" value="Nucleoid-associated protein YbaB"/>
    <property type="match status" value="1"/>
</dbReference>
<dbReference type="Gene3D" id="3.30.1310.10">
    <property type="entry name" value="Nucleoid-associated protein YbaB-like domain"/>
    <property type="match status" value="1"/>
</dbReference>
<dbReference type="HAMAP" id="MF_00274">
    <property type="entry name" value="DNA_YbaB_EbfC"/>
    <property type="match status" value="1"/>
</dbReference>
<dbReference type="InterPro" id="IPR036894">
    <property type="entry name" value="YbaB-like_sf"/>
</dbReference>
<dbReference type="InterPro" id="IPR004401">
    <property type="entry name" value="YbaB/EbfC"/>
</dbReference>
<dbReference type="NCBIfam" id="TIGR00103">
    <property type="entry name" value="DNA_YbaB_EbfC"/>
    <property type="match status" value="1"/>
</dbReference>
<dbReference type="PANTHER" id="PTHR33449">
    <property type="entry name" value="NUCLEOID-ASSOCIATED PROTEIN YBAB"/>
    <property type="match status" value="1"/>
</dbReference>
<dbReference type="PANTHER" id="PTHR33449:SF1">
    <property type="entry name" value="NUCLEOID-ASSOCIATED PROTEIN YBAB"/>
    <property type="match status" value="1"/>
</dbReference>
<dbReference type="Pfam" id="PF02575">
    <property type="entry name" value="YbaB_DNA_bd"/>
    <property type="match status" value="1"/>
</dbReference>
<dbReference type="PIRSF" id="PIRSF004555">
    <property type="entry name" value="UCP004555"/>
    <property type="match status" value="1"/>
</dbReference>
<dbReference type="SUPFAM" id="SSF82607">
    <property type="entry name" value="YbaB-like"/>
    <property type="match status" value="1"/>
</dbReference>
<sequence>MFGKGGMGNLMKQAQQMQERMQKLQEEIAXMEVVGESGAGLVKVTITGSHSVRRVNIDESLMEDDKEMLEDLIAAAFNDAARRVEETQKEKMAAITGGMQLPPGMKMPF</sequence>
<proteinExistence type="inferred from homology"/>
<name>Y2004_VIBVU</name>
<accession>Q8DB23</accession>
<feature type="chain" id="PRO_0000170463" description="Nucleoid-associated protein VV1_2004">
    <location>
        <begin position="1"/>
        <end position="109"/>
    </location>
</feature>